<dbReference type="EMBL" id="D13266">
    <property type="protein sequence ID" value="BAA02524.1"/>
    <property type="molecule type" value="mRNA"/>
</dbReference>
<dbReference type="EMBL" id="BC139823">
    <property type="protein sequence ID" value="AAI39824.1"/>
    <property type="molecule type" value="mRNA"/>
</dbReference>
<dbReference type="CCDS" id="CCDS20202.1"/>
<dbReference type="PIR" id="PN0156">
    <property type="entry name" value="PN0156"/>
</dbReference>
<dbReference type="RefSeq" id="NP_032193.1">
    <property type="nucleotide sequence ID" value="NM_008167.3"/>
</dbReference>
<dbReference type="SMR" id="Q61625"/>
<dbReference type="BioGRID" id="200062">
    <property type="interactions" value="6"/>
</dbReference>
<dbReference type="CORUM" id="Q61625"/>
<dbReference type="FunCoup" id="Q61625">
    <property type="interactions" value="618"/>
</dbReference>
<dbReference type="IntAct" id="Q61625">
    <property type="interactions" value="48"/>
</dbReference>
<dbReference type="MINT" id="Q61625"/>
<dbReference type="STRING" id="10090.ENSMUSP00000093536"/>
<dbReference type="TCDB" id="1.A.10.1.8">
    <property type="family name" value="the glutamate-gated ion channel (gic) family of neurotransmitter receptors"/>
</dbReference>
<dbReference type="GlyConnect" id="2346">
    <property type="glycosylation" value="4 N-Linked glycans (2 sites)"/>
</dbReference>
<dbReference type="GlyCosmos" id="Q61625">
    <property type="glycosylation" value="4 sites, 4 glycans"/>
</dbReference>
<dbReference type="GlyGen" id="Q61625">
    <property type="glycosylation" value="8 sites, 8 N-linked glycans (4 sites), 1 O-linked glycan (3 sites)"/>
</dbReference>
<dbReference type="iPTMnet" id="Q61625"/>
<dbReference type="PhosphoSitePlus" id="Q61625"/>
<dbReference type="SwissPalm" id="Q61625"/>
<dbReference type="PaxDb" id="10090-ENSMUSP00000093536"/>
<dbReference type="PeptideAtlas" id="Q61625"/>
<dbReference type="ProteomicsDB" id="271018"/>
<dbReference type="Pumba" id="Q61625"/>
<dbReference type="Antibodypedia" id="25698">
    <property type="antibodies" value="116 antibodies from 27 providers"/>
</dbReference>
<dbReference type="DNASU" id="14804"/>
<dbReference type="Ensembl" id="ENSMUST00000095852.5">
    <property type="protein sequence ID" value="ENSMUSP00000093536.4"/>
    <property type="gene ID" value="ENSMUSG00000071424.11"/>
</dbReference>
<dbReference type="GeneID" id="14804"/>
<dbReference type="KEGG" id="mmu:14804"/>
<dbReference type="UCSC" id="uc009cdz.1">
    <property type="organism name" value="mouse"/>
</dbReference>
<dbReference type="AGR" id="MGI:95813"/>
<dbReference type="CTD" id="2895"/>
<dbReference type="MGI" id="MGI:95813">
    <property type="gene designation" value="Grid2"/>
</dbReference>
<dbReference type="VEuPathDB" id="HostDB:ENSMUSG00000071424"/>
<dbReference type="eggNOG" id="KOG1052">
    <property type="taxonomic scope" value="Eukaryota"/>
</dbReference>
<dbReference type="GeneTree" id="ENSGT00940000155192"/>
<dbReference type="HOGENOM" id="CLU_007257_9_0_1"/>
<dbReference type="InParanoid" id="Q61625"/>
<dbReference type="OMA" id="EXISNLY"/>
<dbReference type="OrthoDB" id="5984008at2759"/>
<dbReference type="PhylomeDB" id="Q61625"/>
<dbReference type="TreeFam" id="TF352434"/>
<dbReference type="BioGRID-ORCS" id="14804">
    <property type="hits" value="2 hits in 77 CRISPR screens"/>
</dbReference>
<dbReference type="ChiTaRS" id="Grid2">
    <property type="organism name" value="mouse"/>
</dbReference>
<dbReference type="PRO" id="PR:Q61625"/>
<dbReference type="Proteomes" id="UP000000589">
    <property type="component" value="Chromosome 6"/>
</dbReference>
<dbReference type="RNAct" id="Q61625">
    <property type="molecule type" value="protein"/>
</dbReference>
<dbReference type="Bgee" id="ENSMUSG00000071424">
    <property type="expression patterns" value="Expressed in cerebellum lobe and 111 other cell types or tissues"/>
</dbReference>
<dbReference type="ExpressionAtlas" id="Q61625">
    <property type="expression patterns" value="baseline and differential"/>
</dbReference>
<dbReference type="GO" id="GO:0043197">
    <property type="term" value="C:dendritic spine"/>
    <property type="evidence" value="ECO:0000314"/>
    <property type="project" value="BHF-UCL"/>
</dbReference>
<dbReference type="GO" id="GO:0098978">
    <property type="term" value="C:glutamatergic synapse"/>
    <property type="evidence" value="ECO:0000314"/>
    <property type="project" value="SynGO"/>
</dbReference>
<dbReference type="GO" id="GO:0008328">
    <property type="term" value="C:ionotropic glutamate receptor complex"/>
    <property type="evidence" value="ECO:0000314"/>
    <property type="project" value="BHF-UCL"/>
</dbReference>
<dbReference type="GO" id="GO:0016020">
    <property type="term" value="C:membrane"/>
    <property type="evidence" value="ECO:0000314"/>
    <property type="project" value="MGI"/>
</dbReference>
<dbReference type="GO" id="GO:0098688">
    <property type="term" value="C:parallel fiber to Purkinje cell synapse"/>
    <property type="evidence" value="ECO:0000314"/>
    <property type="project" value="SynGO"/>
</dbReference>
<dbReference type="GO" id="GO:0005886">
    <property type="term" value="C:plasma membrane"/>
    <property type="evidence" value="ECO:0000314"/>
    <property type="project" value="BHF-UCL"/>
</dbReference>
<dbReference type="GO" id="GO:0098839">
    <property type="term" value="C:postsynaptic density membrane"/>
    <property type="evidence" value="ECO:0000314"/>
    <property type="project" value="SynGO"/>
</dbReference>
<dbReference type="GO" id="GO:0045211">
    <property type="term" value="C:postsynaptic membrane"/>
    <property type="evidence" value="ECO:0000314"/>
    <property type="project" value="BHF-UCL"/>
</dbReference>
<dbReference type="GO" id="GO:0036477">
    <property type="term" value="C:somatodendritic compartment"/>
    <property type="evidence" value="ECO:0000314"/>
    <property type="project" value="UniProtKB"/>
</dbReference>
<dbReference type="GO" id="GO:0045202">
    <property type="term" value="C:synapse"/>
    <property type="evidence" value="ECO:0000314"/>
    <property type="project" value="MGI"/>
</dbReference>
<dbReference type="GO" id="GO:0042802">
    <property type="term" value="F:identical protein binding"/>
    <property type="evidence" value="ECO:0007669"/>
    <property type="project" value="Ensembl"/>
</dbReference>
<dbReference type="GO" id="GO:0046872">
    <property type="term" value="F:metal ion binding"/>
    <property type="evidence" value="ECO:0007669"/>
    <property type="project" value="UniProtKB-KW"/>
</dbReference>
<dbReference type="GO" id="GO:0030165">
    <property type="term" value="F:PDZ domain binding"/>
    <property type="evidence" value="ECO:0000353"/>
    <property type="project" value="BHF-UCL"/>
</dbReference>
<dbReference type="GO" id="GO:0097110">
    <property type="term" value="F:scaffold protein binding"/>
    <property type="evidence" value="ECO:0000353"/>
    <property type="project" value="BHF-UCL"/>
</dbReference>
<dbReference type="GO" id="GO:1904315">
    <property type="term" value="F:transmitter-gated monoatomic ion channel activity involved in regulation of postsynaptic membrane potential"/>
    <property type="evidence" value="ECO:0007669"/>
    <property type="project" value="Ensembl"/>
</dbReference>
<dbReference type="GO" id="GO:0021707">
    <property type="term" value="P:cerebellar granule cell differentiation"/>
    <property type="evidence" value="ECO:0000316"/>
    <property type="project" value="BHF-UCL"/>
</dbReference>
<dbReference type="GO" id="GO:0060079">
    <property type="term" value="P:excitatory postsynaptic potential"/>
    <property type="evidence" value="ECO:0000315"/>
    <property type="project" value="MGI"/>
</dbReference>
<dbReference type="GO" id="GO:1904861">
    <property type="term" value="P:excitatory synapse assembly"/>
    <property type="evidence" value="ECO:0007669"/>
    <property type="project" value="Ensembl"/>
</dbReference>
<dbReference type="GO" id="GO:0007157">
    <property type="term" value="P:heterophilic cell-cell adhesion via plasma membrane cell adhesion molecules"/>
    <property type="evidence" value="ECO:0000316"/>
    <property type="project" value="BHF-UCL"/>
</dbReference>
<dbReference type="GO" id="GO:1900454">
    <property type="term" value="P:positive regulation of long-term synaptic depression"/>
    <property type="evidence" value="ECO:0007669"/>
    <property type="project" value="Ensembl"/>
</dbReference>
<dbReference type="GO" id="GO:0051965">
    <property type="term" value="P:positive regulation of synapse assembly"/>
    <property type="evidence" value="ECO:0007669"/>
    <property type="project" value="Ensembl"/>
</dbReference>
<dbReference type="GO" id="GO:0060134">
    <property type="term" value="P:prepulse inhibition"/>
    <property type="evidence" value="ECO:0000315"/>
    <property type="project" value="MGI"/>
</dbReference>
<dbReference type="GO" id="GO:0008104">
    <property type="term" value="P:protein localization"/>
    <property type="evidence" value="ECO:0000314"/>
    <property type="project" value="BHF-UCL"/>
</dbReference>
<dbReference type="GO" id="GO:0043523">
    <property type="term" value="P:regulation of neuron apoptotic process"/>
    <property type="evidence" value="ECO:0000315"/>
    <property type="project" value="MGI"/>
</dbReference>
<dbReference type="GO" id="GO:0010975">
    <property type="term" value="P:regulation of neuron projection development"/>
    <property type="evidence" value="ECO:0000315"/>
    <property type="project" value="MGI"/>
</dbReference>
<dbReference type="GO" id="GO:0099151">
    <property type="term" value="P:regulation of postsynaptic density assembly"/>
    <property type="evidence" value="ECO:0000314"/>
    <property type="project" value="SynGO"/>
</dbReference>
<dbReference type="GO" id="GO:0099072">
    <property type="term" value="P:regulation of postsynaptic membrane neurotransmitter receptor levels"/>
    <property type="evidence" value="ECO:0000314"/>
    <property type="project" value="SynGO"/>
</dbReference>
<dbReference type="GO" id="GO:1905606">
    <property type="term" value="P:regulation of presynapse assembly"/>
    <property type="evidence" value="ECO:0007669"/>
    <property type="project" value="Ensembl"/>
</dbReference>
<dbReference type="GO" id="GO:0099538">
    <property type="term" value="P:synaptic signaling via neuropeptide"/>
    <property type="evidence" value="ECO:0007669"/>
    <property type="project" value="Ensembl"/>
</dbReference>
<dbReference type="GO" id="GO:0035249">
    <property type="term" value="P:synaptic transmission, glutamatergic"/>
    <property type="evidence" value="ECO:0000315"/>
    <property type="project" value="MGI"/>
</dbReference>
<dbReference type="CDD" id="cd13731">
    <property type="entry name" value="PBP2_iGluR_delta_2"/>
    <property type="match status" value="1"/>
</dbReference>
<dbReference type="FunFam" id="3.40.190.10:FF:000024">
    <property type="entry name" value="Glutamate receptor, ionotropic, delta 1"/>
    <property type="match status" value="1"/>
</dbReference>
<dbReference type="FunFam" id="3.40.50.2300:FF:000068">
    <property type="entry name" value="Glutamate receptor, ionotropic, delta 1b"/>
    <property type="match status" value="1"/>
</dbReference>
<dbReference type="FunFam" id="1.10.287.70:FF:000045">
    <property type="entry name" value="Glutamate receptor, ionotropic, delta 2"/>
    <property type="match status" value="1"/>
</dbReference>
<dbReference type="FunFam" id="3.40.190.10:FF:000040">
    <property type="entry name" value="Glutamate receptor, ionotropic, delta 2"/>
    <property type="match status" value="1"/>
</dbReference>
<dbReference type="Gene3D" id="1.10.287.70">
    <property type="match status" value="1"/>
</dbReference>
<dbReference type="Gene3D" id="3.40.50.2300">
    <property type="match status" value="2"/>
</dbReference>
<dbReference type="Gene3D" id="3.40.190.10">
    <property type="entry name" value="Periplasmic binding protein-like II"/>
    <property type="match status" value="2"/>
</dbReference>
<dbReference type="InterPro" id="IPR001828">
    <property type="entry name" value="ANF_lig-bd_rcpt"/>
</dbReference>
<dbReference type="InterPro" id="IPR019594">
    <property type="entry name" value="Glu/Gly-bd"/>
</dbReference>
<dbReference type="InterPro" id="IPR001508">
    <property type="entry name" value="Iono_Glu_rcpt_met"/>
</dbReference>
<dbReference type="InterPro" id="IPR015683">
    <property type="entry name" value="Ionotropic_Glu_rcpt"/>
</dbReference>
<dbReference type="InterPro" id="IPR001320">
    <property type="entry name" value="Iontro_rcpt_C"/>
</dbReference>
<dbReference type="InterPro" id="IPR028082">
    <property type="entry name" value="Peripla_BP_I"/>
</dbReference>
<dbReference type="PANTHER" id="PTHR18966">
    <property type="entry name" value="IONOTROPIC GLUTAMATE RECEPTOR"/>
    <property type="match status" value="1"/>
</dbReference>
<dbReference type="Pfam" id="PF01094">
    <property type="entry name" value="ANF_receptor"/>
    <property type="match status" value="1"/>
</dbReference>
<dbReference type="Pfam" id="PF00060">
    <property type="entry name" value="Lig_chan"/>
    <property type="match status" value="1"/>
</dbReference>
<dbReference type="Pfam" id="PF10613">
    <property type="entry name" value="Lig_chan-Glu_bd"/>
    <property type="match status" value="1"/>
</dbReference>
<dbReference type="PRINTS" id="PR00177">
    <property type="entry name" value="NMDARECEPTOR"/>
</dbReference>
<dbReference type="SMART" id="SM00918">
    <property type="entry name" value="Lig_chan-Glu_bd"/>
    <property type="match status" value="1"/>
</dbReference>
<dbReference type="SMART" id="SM00079">
    <property type="entry name" value="PBPe"/>
    <property type="match status" value="1"/>
</dbReference>
<dbReference type="SUPFAM" id="SSF53822">
    <property type="entry name" value="Periplasmic binding protein-like I"/>
    <property type="match status" value="1"/>
</dbReference>
<dbReference type="SUPFAM" id="SSF53850">
    <property type="entry name" value="Periplasmic binding protein-like II"/>
    <property type="match status" value="1"/>
</dbReference>
<sequence length="1007" mass="113082">MEVFPLLLFLSFCWSRTWDLATADSIIHIGAIFDESAKKDDEVFRTAVGDLNQNEEILQTEKITFSVTFVDGNNPFQAVQEACELMNQGILALVSSIGCTSAGSLQSLADAMHIPHLFIQRSTAGTPRSGCGLTRSNRNDDYTLSVRPPVYLNEVILRVVTEYAWQKFIIFYDSEYDIRGIQEFLDKVSQQGMDVALQKVENNINKMITTLFDTMRIEELNRYRDTLRRAILVMNPATAKSFISEVVETNLVAFDCHWIIINEEINDVDVQELVRRSIGRLTIIRQTFPVPQNISQRCFRGNHRISSSLCDPKDPFAQNMEISNLYIYDTVLLLANAFHKKLEDRKWHSMASLSCIRKNSKPWQGGRSMLETIKKGGVNGLTGDLEFGENGGNPNVHFEILGTNYGEELGRGVRKLGCWNPVTGLNGSLTDKKLENNMRGVVLRVVTVLEEPFVMVSENVLGKPKKYQGFSIDVLDALSNYLGFNYEIYVAPDHKYGSPQEDGTWNGLVGELVFKRADIGISALTITPDRENVVDFTTRYMDYSVGVLLRRAEKTVDMFACLAPFDLSLWACIAGTVLLVGLLVYLLNWLNPPRLQMGSMTSTTLYNSMWFVYGSFVQQGGEVPYTTLATRMMMGAWWLFALIVISSYTANLAAFLTITRIESSIQSLQDLSKQTDIPYGTVLDSAVYQHVRMKGLNPFERDSMYSQMWRMINRSNGSENNVLESQAGIQKVKYGNYAFVWDAAVLEYVAINDPDCSFYTVGNTVADRGYGIALQHGSPYRDVFSQRILELQQSGDMDILKHKWWPKNGQCDLYSSVDAKQKGGALDIKSLAGVFCILAAGIVLSCLIAVLETWWSRRKGSRVPSKEDDKEIDLEHLHRRVNSLCTDDDSPHKQFSTSSIDLTPLDIDTLPTRQALEQISDFRNTHITTTTFIPEQIQTLSRTLSAKAASGFAFGSVPEHRTGPFRHRAPNGGFFRSPIKTMSSIPYQPTPTLGLNLGNDPDRGTSI</sequence>
<proteinExistence type="evidence at protein level"/>
<name>GRID2_MOUSE</name>
<organism>
    <name type="scientific">Mus musculus</name>
    <name type="common">Mouse</name>
    <dbReference type="NCBI Taxonomy" id="10090"/>
    <lineage>
        <taxon>Eukaryota</taxon>
        <taxon>Metazoa</taxon>
        <taxon>Chordata</taxon>
        <taxon>Craniata</taxon>
        <taxon>Vertebrata</taxon>
        <taxon>Euteleostomi</taxon>
        <taxon>Mammalia</taxon>
        <taxon>Eutheria</taxon>
        <taxon>Euarchontoglires</taxon>
        <taxon>Glires</taxon>
        <taxon>Rodentia</taxon>
        <taxon>Myomorpha</taxon>
        <taxon>Muroidea</taxon>
        <taxon>Muridae</taxon>
        <taxon>Murinae</taxon>
        <taxon>Mus</taxon>
        <taxon>Mus</taxon>
    </lineage>
</organism>
<feature type="signal peptide" evidence="4">
    <location>
        <begin position="1"/>
        <end position="23"/>
    </location>
</feature>
<feature type="chain" id="PRO_0000011565" description="Glutamate receptor ionotropic, delta-2">
    <location>
        <begin position="24"/>
        <end position="1007"/>
    </location>
</feature>
<feature type="topological domain" description="Extracellular" evidence="4">
    <location>
        <begin position="24"/>
        <end position="566"/>
    </location>
</feature>
<feature type="transmembrane region" description="Helical" evidence="4">
    <location>
        <begin position="567"/>
        <end position="587"/>
    </location>
</feature>
<feature type="topological domain" description="Cytoplasmic" evidence="4">
    <location>
        <begin position="588"/>
        <end position="635"/>
    </location>
</feature>
<feature type="transmembrane region" description="Helical" evidence="4">
    <location>
        <begin position="636"/>
        <end position="656"/>
    </location>
</feature>
<feature type="topological domain" description="Extracellular" evidence="4">
    <location>
        <begin position="657"/>
        <end position="830"/>
    </location>
</feature>
<feature type="transmembrane region" description="Helical" evidence="4">
    <location>
        <begin position="831"/>
        <end position="851"/>
    </location>
</feature>
<feature type="topological domain" description="Cytoplasmic" evidence="4">
    <location>
        <begin position="852"/>
        <end position="1007"/>
    </location>
</feature>
<feature type="region of interest" description="Interaction with CBLN1 homotrimer" evidence="1">
    <location>
        <begin position="24"/>
        <end position="345"/>
    </location>
</feature>
<feature type="region of interest" description="Interaction with AP4M1" evidence="2">
    <location>
        <begin position="921"/>
        <end position="991"/>
    </location>
</feature>
<feature type="short sequence motif" description="PDZ-binding">
    <location>
        <begin position="1005"/>
        <end position="1007"/>
    </location>
</feature>
<feature type="binding site" evidence="3">
    <location>
        <position position="531"/>
    </location>
    <ligand>
        <name>Ca(2+)</name>
        <dbReference type="ChEBI" id="CHEBI:29108"/>
        <label>1</label>
    </ligand>
</feature>
<feature type="binding site" evidence="3">
    <location>
        <position position="534"/>
    </location>
    <ligand>
        <name>Ca(2+)</name>
        <dbReference type="ChEBI" id="CHEBI:29108"/>
        <label>1</label>
    </ligand>
</feature>
<feature type="binding site" evidence="3">
    <location>
        <position position="535"/>
    </location>
    <ligand>
        <name>Ca(2+)</name>
        <dbReference type="ChEBI" id="CHEBI:29108"/>
        <label>1</label>
    </ligand>
</feature>
<feature type="binding site" evidence="3">
    <location>
        <position position="753"/>
    </location>
    <ligand>
        <name>Ca(2+)</name>
        <dbReference type="ChEBI" id="CHEBI:29108"/>
        <label>2</label>
    </ligand>
</feature>
<feature type="binding site" evidence="3">
    <location>
        <position position="755"/>
    </location>
    <ligand>
        <name>Ca(2+)</name>
        <dbReference type="ChEBI" id="CHEBI:29108"/>
        <label>2</label>
    </ligand>
</feature>
<feature type="binding site" evidence="3">
    <location>
        <position position="757"/>
    </location>
    <ligand>
        <name>Ca(2+)</name>
        <dbReference type="ChEBI" id="CHEBI:29108"/>
        <label>2</label>
    </ligand>
</feature>
<feature type="site" description="Essential for dimerization" evidence="1">
    <location>
        <position position="76"/>
    </location>
</feature>
<feature type="modified residue" description="Phosphoserine" evidence="21">
    <location>
        <position position="883"/>
    </location>
</feature>
<feature type="modified residue" description="Phosphothreonine" evidence="21">
    <location>
        <position position="886"/>
    </location>
</feature>
<feature type="modified residue" description="Phosphoserine" evidence="21">
    <location>
        <position position="890"/>
    </location>
</feature>
<feature type="modified residue" description="Phosphoserine" evidence="2">
    <location>
        <position position="1006"/>
    </location>
</feature>
<feature type="glycosylation site" description="N-linked (GlcNAc...) asparagine" evidence="4">
    <location>
        <position position="293"/>
    </location>
</feature>
<feature type="glycosylation site" description="N-linked (GlcNAc...) asparagine" evidence="4">
    <location>
        <position position="426"/>
    </location>
</feature>
<feature type="glycosylation site" description="N-linked (GlcNAc...) asparagine" evidence="4">
    <location>
        <position position="713"/>
    </location>
</feature>
<feature type="glycosylation site" description="N-linked (GlcNAc...) asparagine" evidence="4">
    <location>
        <position position="716"/>
    </location>
</feature>
<feature type="disulfide bond" evidence="1">
    <location>
        <begin position="83"/>
        <end position="355"/>
    </location>
</feature>
<feature type="disulfide bond" evidence="1">
    <location>
        <begin position="99"/>
        <end position="131"/>
    </location>
</feature>
<feature type="disulfide bond" evidence="1">
    <location>
        <begin position="298"/>
        <end position="310"/>
    </location>
</feature>
<feature type="sequence variant" description="In Lurcher." evidence="17">
    <original>A</original>
    <variation>T</variation>
    <location>
        <position position="654"/>
    </location>
</feature>
<feature type="mutagenesis site" description="Abolishes interaction with SHANK1 and SHANK2." evidence="6">
    <original>S</original>
    <variation>A</variation>
    <location>
        <position position="920"/>
    </location>
</feature>
<protein>
    <recommendedName>
        <fullName>Glutamate receptor ionotropic, delta-2</fullName>
        <shortName>GluD2</shortName>
        <shortName>GluR delta-2 subunit</shortName>
    </recommendedName>
</protein>
<evidence type="ECO:0000250" key="1">
    <source>
        <dbReference type="UniProtKB" id="O43424"/>
    </source>
</evidence>
<evidence type="ECO:0000250" key="2">
    <source>
        <dbReference type="UniProtKB" id="Q63226"/>
    </source>
</evidence>
<evidence type="ECO:0000250" key="3">
    <source>
        <dbReference type="UniProtKB" id="Q9ULK0"/>
    </source>
</evidence>
<evidence type="ECO:0000255" key="4"/>
<evidence type="ECO:0000269" key="5">
    <source>
    </source>
</evidence>
<evidence type="ECO:0000269" key="6">
    <source>
    </source>
</evidence>
<evidence type="ECO:0000269" key="7">
    <source>
    </source>
</evidence>
<evidence type="ECO:0000269" key="8">
    <source>
    </source>
</evidence>
<evidence type="ECO:0000269" key="9">
    <source>
    </source>
</evidence>
<evidence type="ECO:0000269" key="10">
    <source>
    </source>
</evidence>
<evidence type="ECO:0000269" key="11">
    <source>
    </source>
</evidence>
<evidence type="ECO:0000269" key="12">
    <source>
    </source>
</evidence>
<evidence type="ECO:0000269" key="13">
    <source>
    </source>
</evidence>
<evidence type="ECO:0000269" key="14">
    <source>
    </source>
</evidence>
<evidence type="ECO:0000269" key="15">
    <source>
    </source>
</evidence>
<evidence type="ECO:0000269" key="16">
    <source>
    </source>
</evidence>
<evidence type="ECO:0000269" key="17">
    <source>
    </source>
</evidence>
<evidence type="ECO:0000305" key="18"/>
<evidence type="ECO:0000305" key="19">
    <source>
    </source>
</evidence>
<evidence type="ECO:0000305" key="20">
    <source>
    </source>
</evidence>
<evidence type="ECO:0007744" key="21">
    <source>
    </source>
</evidence>
<reference key="1">
    <citation type="journal article" date="1993" name="Biochem. Biophys. Res. Commun.">
        <title>Selective expression of the glutamate receptor channel delta 2 subunit in cerebellar Purkinje cells.</title>
        <authorList>
            <person name="Araki K."/>
            <person name="Meguro H."/>
            <person name="Kushiya E."/>
            <person name="Takayama C."/>
            <person name="Inoue Y."/>
            <person name="Mishina M."/>
        </authorList>
    </citation>
    <scope>NUCLEOTIDE SEQUENCE [MRNA]</scope>
    <scope>TISSUE SPECIFICITY</scope>
    <source>
        <strain>ICR</strain>
        <tissue>Brain</tissue>
    </source>
</reference>
<reference key="2">
    <citation type="journal article" date="2004" name="Genome Res.">
        <title>The status, quality, and expansion of the NIH full-length cDNA project: the Mammalian Gene Collection (MGC).</title>
        <authorList>
            <consortium name="The MGC Project Team"/>
        </authorList>
    </citation>
    <scope>NUCLEOTIDE SEQUENCE [LARGE SCALE MRNA]</scope>
</reference>
<reference key="3">
    <citation type="journal article" date="2002" name="Neuron">
        <title>A novel protein complex linking the delta 2 glutamate receptor and autophagy: implications for neurodegeneration in lurcher mice.</title>
        <authorList>
            <person name="Yue Z."/>
            <person name="Horton A."/>
            <person name="Bravin M."/>
            <person name="DeJager P.L."/>
            <person name="Selimi F."/>
            <person name="Heintz N."/>
        </authorList>
    </citation>
    <scope>INTERACTION WITH GOPC AND BECN1</scope>
    <scope>DOMAIN</scope>
</reference>
<reference key="4">
    <citation type="journal article" date="2004" name="Mol. Cell. Neurosci.">
        <title>Direct interaction of GluRdelta2 with Shank scaffold proteins in cerebellar Purkinje cells.</title>
        <authorList>
            <person name="Uemura T."/>
            <person name="Mori H."/>
            <person name="Mishina M."/>
        </authorList>
    </citation>
    <scope>INTERACTION WITH SHANK1 AND SHANK2</scope>
    <scope>MUTAGENESIS OF SER-920</scope>
    <scope>TISSUE SPECIFICITY</scope>
</reference>
<reference key="5">
    <citation type="journal article" date="2006" name="Biochem. Biophys. Res. Commun.">
        <title>Binding of glutamate receptor delta2 to its scaffold protein, Delphilin, is regulated by PKA.</title>
        <authorList>
            <person name="Sonoda T."/>
            <person name="Mochizuki C."/>
            <person name="Yamashita T."/>
            <person name="Watanabe-Kaneko K."/>
            <person name="Miyagi Y."/>
            <person name="Shigeri Y."/>
            <person name="Yazama F."/>
            <person name="Okuda K."/>
            <person name="Kawamoto S."/>
        </authorList>
    </citation>
    <scope>INTERACTION WITH GRID2IP</scope>
</reference>
<reference key="6">
    <citation type="journal article" date="2010" name="Cell">
        <title>A tissue-specific atlas of mouse protein phosphorylation and expression.</title>
        <authorList>
            <person name="Huttlin E.L."/>
            <person name="Jedrychowski M.P."/>
            <person name="Elias J.E."/>
            <person name="Goswami T."/>
            <person name="Rad R."/>
            <person name="Beausoleil S.A."/>
            <person name="Villen J."/>
            <person name="Haas W."/>
            <person name="Sowa M.E."/>
            <person name="Gygi S.P."/>
        </authorList>
    </citation>
    <scope>PHOSPHORYLATION [LARGE SCALE ANALYSIS] AT SER-883; THR-886 AND SER-890</scope>
    <scope>IDENTIFICATION BY MASS SPECTROMETRY [LARGE SCALE ANALYSIS]</scope>
    <source>
        <tissue>Brain</tissue>
    </source>
</reference>
<reference key="7">
    <citation type="journal article" date="2010" name="Science">
        <title>Cbln1 is a ligand for an orphan glutamate receptor delta2, a bidirectional synapse organizer.</title>
        <authorList>
            <person name="Matsuda K."/>
            <person name="Miura E."/>
            <person name="Miyazaki T."/>
            <person name="Kakegawa W."/>
            <person name="Emi K."/>
            <person name="Narumi S."/>
            <person name="Fukazawa Y."/>
            <person name="Ito-Ishida A."/>
            <person name="Kondo T."/>
            <person name="Shigemoto R."/>
            <person name="Watanabe M."/>
            <person name="Yuzaki M."/>
        </authorList>
    </citation>
    <scope>INTERACTION WITH CBLN1</scope>
</reference>
<reference key="8">
    <citation type="journal article" date="2011" name="Eur. J. Neurosci.">
        <title>Cbln family proteins promote synapse formation by regulating distinct neurexin signaling pathways in various brain regions.</title>
        <authorList>
            <person name="Matsuda K."/>
            <person name="Yuzaki M."/>
        </authorList>
    </citation>
    <scope>INTERACTION WITH CBLN1</scope>
</reference>
<reference key="9">
    <citation type="journal article" date="2012" name="J. Neurochem.">
        <title>The Cbln family of proteins interact with multiple signaling pathways.</title>
        <authorList>
            <person name="Wei P."/>
            <person name="Pattarini R."/>
            <person name="Rong Y."/>
            <person name="Guo H."/>
            <person name="Bansal P.K."/>
            <person name="Kusnoor S.V."/>
            <person name="Deutch A.Y."/>
            <person name="Parris J."/>
            <person name="Morgan J.I."/>
        </authorList>
    </citation>
    <scope>INTERACTION WITH CBLN1 AND CBLN2</scope>
</reference>
<reference key="10">
    <citation type="journal article" date="2014" name="EMBO Rep.">
        <title>Type 1 metabotropic glutamate receptors (mGlu1) trigger the gating of GluD2 delta glutamate receptors.</title>
        <authorList>
            <person name="Ady V."/>
            <person name="Perroy J."/>
            <person name="Tricoire L."/>
            <person name="Piochon C."/>
            <person name="Dadak S."/>
            <person name="Chen X."/>
            <person name="Dusart I."/>
            <person name="Fagni L."/>
            <person name="Lambolez B."/>
            <person name="Levenes C."/>
        </authorList>
    </citation>
    <scope>FUNCTION</scope>
    <scope>SUBCELLULAR LOCATION</scope>
</reference>
<reference key="11">
    <citation type="journal article" date="2017" name="Neuropharmacology">
        <title>mGlu1 receptor canonical signaling pathway contributes to the opening of the orphan GluD2 receptor.</title>
        <authorList>
            <person name="Dadak S."/>
            <person name="Bouquier N."/>
            <person name="Goyet E."/>
            <person name="Fagni L."/>
            <person name="Levenes C."/>
            <person name="Perroy J."/>
        </authorList>
    </citation>
    <scope>FUNCTION</scope>
</reference>
<reference key="12">
    <citation type="journal article" date="2018" name="Brain Res.">
        <title>Glycosylation of Cblns attenuates their receptor binding.</title>
        <authorList>
            <person name="Rong Y."/>
            <person name="Bansal P.K."/>
            <person name="Wei P."/>
            <person name="Guo H."/>
            <person name="Correia K."/>
            <person name="Parris J."/>
            <person name="Morgan J.I."/>
        </authorList>
    </citation>
    <scope>INTERACTION WITH CBLN1</scope>
</reference>
<reference key="13">
    <citation type="journal article" date="2021" name="Sci. Adv.">
        <title>Delta glutamate receptors are functional glycine- and D-serine-gated cation channels in situ.</title>
        <authorList>
            <person name="Carrillo E."/>
            <person name="Gonzalez C.U."/>
            <person name="Berka V."/>
            <person name="Jayaraman V."/>
        </authorList>
    </citation>
    <scope>FUNCTION</scope>
    <scope>TRANSPORTER ACTIVITY</scope>
</reference>
<reference key="14">
    <citation type="journal article" date="2024" name="Proc. Natl. Acad. Sci. U.S.A.">
        <title>Lack of evidence for direct ligand-gated ion channel activity of GluD receptors.</title>
        <authorList>
            <person name="Itoh M."/>
            <person name="Piot L."/>
            <person name="Mony L."/>
            <person name="Paoletti P."/>
            <person name="Yuzaki M."/>
        </authorList>
    </citation>
    <scope>FUNCTION</scope>
    <scope>CAUTION</scope>
</reference>
<reference key="15">
    <citation type="journal article" date="1997" name="Nature">
        <title>Neurodegeneration in Lurcher mice caused by mutation in delta2 glutamate receptor gene.</title>
        <authorList>
            <person name="Zuo J."/>
            <person name="De Jager P.L."/>
            <person name="Takahashi K.A."/>
            <person name="Jiang W."/>
            <person name="Linden D.J."/>
            <person name="Heintz N."/>
        </authorList>
    </citation>
    <scope>VARIANT LURCHER THR-654</scope>
    <source>
        <tissue>Purkinje cell</tissue>
    </source>
</reference>
<comment type="function">
    <text evidence="1 11 12 14 15">Member of the ionotropic glutamate receptor family, which plays a crucial role in synaptic organization and signal transduction in the central nervous system. Although it shares structural features with ionotropic glutamate receptors, does not bind glutamate as a primary ligand (PubMed:24357660). Promotes synaptogenesis and mediates the D-Serine-dependent long term depression signals and AMPA receptor endocytosis of cerebellar parallel fiber-Purkinje cell (PF-PC) synapses through the NRX1B-CBLN1-GRID2 triad complex (By similarity). In the presence of neurexins and cerebellins, forms cation-selective channels that are proposed to be gated by glycine and D-serine (PubMed:34936451). However, recent research disputes this ligand-gated cation channel activity (PubMed:39052831). Cation-selective ion channel activity can be triggered by GRM1 in Purkinje cells (PubMed:24357660, PubMed:27276689).</text>
</comment>
<comment type="catalytic activity">
    <reaction evidence="20">
        <text>Ca(2+)(in) = Ca(2+)(out)</text>
        <dbReference type="Rhea" id="RHEA:29671"/>
        <dbReference type="ChEBI" id="CHEBI:29108"/>
    </reaction>
</comment>
<comment type="catalytic activity">
    <reaction evidence="20">
        <text>Na(+)(in) = Na(+)(out)</text>
        <dbReference type="Rhea" id="RHEA:34963"/>
        <dbReference type="ChEBI" id="CHEBI:29101"/>
    </reaction>
</comment>
<comment type="subunit">
    <text evidence="1 2 5 6 7 8 9 10 13">Tetramer; dimer of dimers (By similarity). Interacts with EML2, MAGI2 (via PDZ domains) and AP4M1 (By similarity). Interacts with BECN1, GOPC, GRID2IP, SHANK1 and SHANK2 (PubMed:12372286, PubMed:15207857, PubMed:17027646). Interacts with CBLN2, but not with CBLN4 (PubMed:22220752). Interacts with CBLN1 (via C1q domain); the interaction is CBLN1-NRX1 complex formation-dependent; CBLN1-binding is calcium-independent; CBLN1 hexamers anchor GRID2 N-terminal domain dimers to monomeric NRXN1 isoform beta; promotes synaptogenesis and mediates the D-Serine-dependent long term depression signals and AMPA receptor endocytosis (PubMed:20395510, PubMed:21410790, PubMed:22220752, PubMed:29782851).</text>
</comment>
<comment type="interaction">
    <interactant intactId="EBI-2794106">
        <id>Q61625</id>
    </interactant>
    <interactant intactId="EBI-2794140">
        <id>Q9R171</id>
        <label>Cbln1</label>
    </interactant>
    <organismsDiffer>false</organismsDiffer>
    <experiments>8</experiments>
</comment>
<comment type="interaction">
    <interactant intactId="EBI-2794106">
        <id>Q61625</id>
    </interactant>
    <interactant intactId="EBI-296357">
        <id>Q8BH60</id>
        <label>Gopc</label>
    </interactant>
    <organismsDiffer>false</organismsDiffer>
    <experiments>5</experiments>
</comment>
<comment type="interaction">
    <interactant intactId="EBI-2794106">
        <id>Q61625</id>
    </interactant>
    <interactant intactId="EBI-2314988">
        <id>D3YZU1</id>
        <label>Shank1</label>
    </interactant>
    <organismsDiffer>false</organismsDiffer>
    <experiments>3</experiments>
</comment>
<comment type="interaction">
    <interactant intactId="EBI-2794106">
        <id>Q61625</id>
    </interactant>
    <interactant intactId="EBI-770338">
        <id>Q80Z38</id>
        <label>Shank2</label>
    </interactant>
    <organismsDiffer>false</organismsDiffer>
    <experiments>10</experiments>
</comment>
<comment type="interaction">
    <interactant intactId="EBI-2794106">
        <id>Q61625</id>
    </interactant>
    <interactant intactId="EBI-80909">
        <id>Q9WV48</id>
        <label>Shank1</label>
    </interactant>
    <organismsDiffer>true</organismsDiffer>
    <experiments>5</experiments>
</comment>
<comment type="subcellular location">
    <subcellularLocation>
        <location evidence="19">Postsynaptic cell membrane</location>
        <topology evidence="4">Multi-pass membrane protein</topology>
    </subcellularLocation>
</comment>
<comment type="tissue specificity">
    <text evidence="6 16">Expressed selectively in cerebellar Purkinje cells where it is localized in dendritic spines.</text>
</comment>
<comment type="domain">
    <text evidence="5">The PDZ-binding motif mediates interaction with GOPC.</text>
</comment>
<comment type="disease">
    <text>Defects in Grid2 are the cause of the Lurcher phenotype. Heterozygous animals display a characteristic swaying of the hind quarters and jerky up and down movements following cerebellar Purkinje cell degeneration during postnatal development. Homozygous animals die shortly after birth because of a massive loss of midbrain and hindbrain neurons during late embryogenesis.</text>
</comment>
<comment type="similarity">
    <text evidence="18">Belongs to the glutamate-gated ion channel (TC 1.A.10.1) family. GRID2 subfamily.</text>
</comment>
<comment type="caution">
    <text evidence="14 15">The ligand-gated cation channel activity triggered by glycine and D-serine, first reported in an article, has been a subject of controversy (PubMed:34936451). These findings have been challenged by more recent research (PubMed:39052831).</text>
</comment>
<keyword id="KW-0106">Calcium</keyword>
<keyword id="KW-1003">Cell membrane</keyword>
<keyword id="KW-0225">Disease variant</keyword>
<keyword id="KW-1015">Disulfide bond</keyword>
<keyword id="KW-0325">Glycoprotein</keyword>
<keyword id="KW-0407">Ion channel</keyword>
<keyword id="KW-0406">Ion transport</keyword>
<keyword id="KW-1071">Ligand-gated ion channel</keyword>
<keyword id="KW-0472">Membrane</keyword>
<keyword id="KW-0479">Metal-binding</keyword>
<keyword id="KW-0597">Phosphoprotein</keyword>
<keyword id="KW-0628">Postsynaptic cell membrane</keyword>
<keyword id="KW-0675">Receptor</keyword>
<keyword id="KW-1185">Reference proteome</keyword>
<keyword id="KW-0732">Signal</keyword>
<keyword id="KW-0770">Synapse</keyword>
<keyword id="KW-0812">Transmembrane</keyword>
<keyword id="KW-1133">Transmembrane helix</keyword>
<keyword id="KW-0813">Transport</keyword>
<accession>Q61625</accession>
<accession>A4QPG1</accession>
<gene>
    <name type="primary">Grid2</name>
</gene>